<proteinExistence type="inferred from homology"/>
<reference key="1">
    <citation type="submission" date="2005-09" db="EMBL/GenBank/DDBJ databases">
        <title>Annotation of the Aspergillus terreus NIH2624 genome.</title>
        <authorList>
            <person name="Birren B.W."/>
            <person name="Lander E.S."/>
            <person name="Galagan J.E."/>
            <person name="Nusbaum C."/>
            <person name="Devon K."/>
            <person name="Henn M."/>
            <person name="Ma L.-J."/>
            <person name="Jaffe D.B."/>
            <person name="Butler J."/>
            <person name="Alvarez P."/>
            <person name="Gnerre S."/>
            <person name="Grabherr M."/>
            <person name="Kleber M."/>
            <person name="Mauceli E.W."/>
            <person name="Brockman W."/>
            <person name="Rounsley S."/>
            <person name="Young S.K."/>
            <person name="LaButti K."/>
            <person name="Pushparaj V."/>
            <person name="DeCaprio D."/>
            <person name="Crawford M."/>
            <person name="Koehrsen M."/>
            <person name="Engels R."/>
            <person name="Montgomery P."/>
            <person name="Pearson M."/>
            <person name="Howarth C."/>
            <person name="Larson L."/>
            <person name="Luoma S."/>
            <person name="White J."/>
            <person name="Alvarado L."/>
            <person name="Kodira C.D."/>
            <person name="Zeng Q."/>
            <person name="Oleary S."/>
            <person name="Yandava C."/>
            <person name="Denning D.W."/>
            <person name="Nierman W.C."/>
            <person name="Milne T."/>
            <person name="Madden K."/>
        </authorList>
    </citation>
    <scope>NUCLEOTIDE SEQUENCE [LARGE SCALE GENOMIC DNA]</scope>
    <source>
        <strain>NIH 2624 / FGSC A1156</strain>
    </source>
</reference>
<comment type="function">
    <text evidence="1">ATP-dependent RNA helicase involved in 40S ribosomal subunit biogenesis. Required for the processing and cleavage of 35S pre-rRNA at sites A0, A1, and A2, leading to mature 18S rRNA (By similarity).</text>
</comment>
<comment type="catalytic activity">
    <reaction>
        <text>ATP + H2O = ADP + phosphate + H(+)</text>
        <dbReference type="Rhea" id="RHEA:13065"/>
        <dbReference type="ChEBI" id="CHEBI:15377"/>
        <dbReference type="ChEBI" id="CHEBI:15378"/>
        <dbReference type="ChEBI" id="CHEBI:30616"/>
        <dbReference type="ChEBI" id="CHEBI:43474"/>
        <dbReference type="ChEBI" id="CHEBI:456216"/>
        <dbReference type="EC" id="3.6.4.13"/>
    </reaction>
</comment>
<comment type="subcellular location">
    <subcellularLocation>
        <location evidence="1">Nucleus</location>
        <location evidence="1">Nucleolus</location>
    </subcellularLocation>
</comment>
<comment type="domain">
    <text>The Q motif is unique to and characteristic of the DEAD box family of RNA helicases and controls ATP binding and hydrolysis.</text>
</comment>
<comment type="similarity">
    <text evidence="4">Belongs to the DEAD box helicase family. DDX48/FAL1 subfamily.</text>
</comment>
<dbReference type="EC" id="3.6.4.13"/>
<dbReference type="EMBL" id="CH476607">
    <property type="protein sequence ID" value="EAU30343.1"/>
    <property type="molecule type" value="Genomic_DNA"/>
</dbReference>
<dbReference type="RefSeq" id="XP_001217828.1">
    <property type="nucleotide sequence ID" value="XM_001217827.1"/>
</dbReference>
<dbReference type="SMR" id="Q0CAS8"/>
<dbReference type="STRING" id="341663.Q0CAS8"/>
<dbReference type="EnsemblFungi" id="EAU30343">
    <property type="protein sequence ID" value="EAU30343"/>
    <property type="gene ID" value="ATEG_09206"/>
</dbReference>
<dbReference type="GeneID" id="4353777"/>
<dbReference type="VEuPathDB" id="FungiDB:ATEG_09206"/>
<dbReference type="eggNOG" id="KOG0328">
    <property type="taxonomic scope" value="Eukaryota"/>
</dbReference>
<dbReference type="HOGENOM" id="CLU_003041_1_0_1"/>
<dbReference type="OMA" id="TRFHDFK"/>
<dbReference type="OrthoDB" id="10265785at2759"/>
<dbReference type="Proteomes" id="UP000007963">
    <property type="component" value="Unassembled WGS sequence"/>
</dbReference>
<dbReference type="GO" id="GO:0030874">
    <property type="term" value="C:nucleolar chromatin"/>
    <property type="evidence" value="ECO:0007669"/>
    <property type="project" value="EnsemblFungi"/>
</dbReference>
<dbReference type="GO" id="GO:0005524">
    <property type="term" value="F:ATP binding"/>
    <property type="evidence" value="ECO:0007669"/>
    <property type="project" value="UniProtKB-KW"/>
</dbReference>
<dbReference type="GO" id="GO:0016887">
    <property type="term" value="F:ATP hydrolysis activity"/>
    <property type="evidence" value="ECO:0007669"/>
    <property type="project" value="RHEA"/>
</dbReference>
<dbReference type="GO" id="GO:0003723">
    <property type="term" value="F:RNA binding"/>
    <property type="evidence" value="ECO:0007669"/>
    <property type="project" value="UniProtKB-KW"/>
</dbReference>
<dbReference type="GO" id="GO:0003724">
    <property type="term" value="F:RNA helicase activity"/>
    <property type="evidence" value="ECO:0007669"/>
    <property type="project" value="UniProtKB-EC"/>
</dbReference>
<dbReference type="GO" id="GO:0006364">
    <property type="term" value="P:rRNA processing"/>
    <property type="evidence" value="ECO:0007669"/>
    <property type="project" value="UniProtKB-KW"/>
</dbReference>
<dbReference type="CDD" id="cd18045">
    <property type="entry name" value="DEADc_EIF4AIII_DDX48"/>
    <property type="match status" value="1"/>
</dbReference>
<dbReference type="CDD" id="cd18787">
    <property type="entry name" value="SF2_C_DEAD"/>
    <property type="match status" value="1"/>
</dbReference>
<dbReference type="FunFam" id="3.40.50.300:FF:000031">
    <property type="entry name" value="Eukaryotic initiation factor 4A-III"/>
    <property type="match status" value="1"/>
</dbReference>
<dbReference type="FunFam" id="3.40.50.300:FF:000498">
    <property type="entry name" value="Eukaryotic initiation factor 4A-III"/>
    <property type="match status" value="1"/>
</dbReference>
<dbReference type="Gene3D" id="3.40.50.300">
    <property type="entry name" value="P-loop containing nucleotide triphosphate hydrolases"/>
    <property type="match status" value="2"/>
</dbReference>
<dbReference type="InterPro" id="IPR011545">
    <property type="entry name" value="DEAD/DEAH_box_helicase_dom"/>
</dbReference>
<dbReference type="InterPro" id="IPR014001">
    <property type="entry name" value="Helicase_ATP-bd"/>
</dbReference>
<dbReference type="InterPro" id="IPR001650">
    <property type="entry name" value="Helicase_C-like"/>
</dbReference>
<dbReference type="InterPro" id="IPR027417">
    <property type="entry name" value="P-loop_NTPase"/>
</dbReference>
<dbReference type="InterPro" id="IPR000629">
    <property type="entry name" value="RNA-helicase_DEAD-box_CS"/>
</dbReference>
<dbReference type="InterPro" id="IPR014014">
    <property type="entry name" value="RNA_helicase_DEAD_Q_motif"/>
</dbReference>
<dbReference type="PANTHER" id="PTHR47958">
    <property type="entry name" value="ATP-DEPENDENT RNA HELICASE DBP3"/>
    <property type="match status" value="1"/>
</dbReference>
<dbReference type="Pfam" id="PF00270">
    <property type="entry name" value="DEAD"/>
    <property type="match status" value="1"/>
</dbReference>
<dbReference type="Pfam" id="PF00271">
    <property type="entry name" value="Helicase_C"/>
    <property type="match status" value="1"/>
</dbReference>
<dbReference type="SMART" id="SM00487">
    <property type="entry name" value="DEXDc"/>
    <property type="match status" value="1"/>
</dbReference>
<dbReference type="SMART" id="SM00490">
    <property type="entry name" value="HELICc"/>
    <property type="match status" value="1"/>
</dbReference>
<dbReference type="SUPFAM" id="SSF52540">
    <property type="entry name" value="P-loop containing nucleoside triphosphate hydrolases"/>
    <property type="match status" value="1"/>
</dbReference>
<dbReference type="PROSITE" id="PS00039">
    <property type="entry name" value="DEAD_ATP_HELICASE"/>
    <property type="match status" value="1"/>
</dbReference>
<dbReference type="PROSITE" id="PS51192">
    <property type="entry name" value="HELICASE_ATP_BIND_1"/>
    <property type="match status" value="1"/>
</dbReference>
<dbReference type="PROSITE" id="PS51194">
    <property type="entry name" value="HELICASE_CTER"/>
    <property type="match status" value="1"/>
</dbReference>
<dbReference type="PROSITE" id="PS51195">
    <property type="entry name" value="Q_MOTIF"/>
    <property type="match status" value="1"/>
</dbReference>
<sequence>MADGIDRRADDRMEFNTSKEVTVAPTFEDMHLKESLLRGIYAYGYESPSAVQSRAIVQICKGRDTIAQAQSGTGKTATFAISILQVIDTVVRESQALVLSPTRELATQIQSVIMALGDYMNVQCHACIGGTNIGEDIRKLDYGQHVVSGTPGRVADMIRRRHLRTRHIKMLVLDEADELLNRGFREQIYDVYRYLPPATQVVVVSATLPYDVLDMTTKFMTDPVRVLVKRDELTLEGIKQYFIAVEKEEWKFDTLCDLYDTLTITQAVIFCNTRRKVDWLTDKMREANFTVSSMHGEMPQKERDSIMQDFRQGNSRVLISTDVWARGIDVQQVSLVINYDLPTNRENYIHRIGRSGRFGRKGVAINFVTSDDVRILRDIELYYSTQIDEMPMNVADLLS</sequence>
<organism>
    <name type="scientific">Aspergillus terreus (strain NIH 2624 / FGSC A1156)</name>
    <dbReference type="NCBI Taxonomy" id="341663"/>
    <lineage>
        <taxon>Eukaryota</taxon>
        <taxon>Fungi</taxon>
        <taxon>Dikarya</taxon>
        <taxon>Ascomycota</taxon>
        <taxon>Pezizomycotina</taxon>
        <taxon>Eurotiomycetes</taxon>
        <taxon>Eurotiomycetidae</taxon>
        <taxon>Eurotiales</taxon>
        <taxon>Aspergillaceae</taxon>
        <taxon>Aspergillus</taxon>
        <taxon>Aspergillus subgen. Circumdati</taxon>
    </lineage>
</organism>
<gene>
    <name type="primary">fal1</name>
    <name type="ORF">ATEG_09206</name>
</gene>
<keyword id="KW-0067">ATP-binding</keyword>
<keyword id="KW-0347">Helicase</keyword>
<keyword id="KW-0378">Hydrolase</keyword>
<keyword id="KW-0547">Nucleotide-binding</keyword>
<keyword id="KW-0539">Nucleus</keyword>
<keyword id="KW-1185">Reference proteome</keyword>
<keyword id="KW-0690">Ribosome biogenesis</keyword>
<keyword id="KW-0694">RNA-binding</keyword>
<keyword id="KW-0698">rRNA processing</keyword>
<name>FAL1_ASPTN</name>
<accession>Q0CAS8</accession>
<protein>
    <recommendedName>
        <fullName>ATP-dependent RNA helicase fal1</fullName>
        <ecNumber>3.6.4.13</ecNumber>
    </recommendedName>
</protein>
<evidence type="ECO:0000250" key="1"/>
<evidence type="ECO:0000255" key="2">
    <source>
        <dbReference type="PROSITE-ProRule" id="PRU00541"/>
    </source>
</evidence>
<evidence type="ECO:0000255" key="3">
    <source>
        <dbReference type="PROSITE-ProRule" id="PRU00542"/>
    </source>
</evidence>
<evidence type="ECO:0000305" key="4"/>
<feature type="chain" id="PRO_0000282445" description="ATP-dependent RNA helicase fal1">
    <location>
        <begin position="1"/>
        <end position="399"/>
    </location>
</feature>
<feature type="domain" description="Helicase ATP-binding" evidence="2">
    <location>
        <begin position="56"/>
        <end position="226"/>
    </location>
</feature>
<feature type="domain" description="Helicase C-terminal" evidence="3">
    <location>
        <begin position="237"/>
        <end position="398"/>
    </location>
</feature>
<feature type="short sequence motif" description="Q motif">
    <location>
        <begin position="25"/>
        <end position="53"/>
    </location>
</feature>
<feature type="short sequence motif" description="DEAD box">
    <location>
        <begin position="174"/>
        <end position="177"/>
    </location>
</feature>
<feature type="binding site" evidence="2">
    <location>
        <begin position="69"/>
        <end position="76"/>
    </location>
    <ligand>
        <name>ATP</name>
        <dbReference type="ChEBI" id="CHEBI:30616"/>
    </ligand>
</feature>